<organism>
    <name type="scientific">Listeria innocua serovar 6a (strain ATCC BAA-680 / CLIP 11262)</name>
    <dbReference type="NCBI Taxonomy" id="272626"/>
    <lineage>
        <taxon>Bacteria</taxon>
        <taxon>Bacillati</taxon>
        <taxon>Bacillota</taxon>
        <taxon>Bacilli</taxon>
        <taxon>Bacillales</taxon>
        <taxon>Listeriaceae</taxon>
        <taxon>Listeria</taxon>
    </lineage>
</organism>
<name>METN1_LISIN</name>
<dbReference type="EC" id="7.4.2.11" evidence="1"/>
<dbReference type="EMBL" id="AL596164">
    <property type="protein sequence ID" value="CAC95545.1"/>
    <property type="molecule type" value="Genomic_DNA"/>
</dbReference>
<dbReference type="PIR" id="AI1471">
    <property type="entry name" value="AI1471"/>
</dbReference>
<dbReference type="RefSeq" id="WP_003765155.1">
    <property type="nucleotide sequence ID" value="NC_003212.1"/>
</dbReference>
<dbReference type="SMR" id="Q92EZ6"/>
<dbReference type="STRING" id="272626.gene:17564639"/>
<dbReference type="KEGG" id="lin:lin0312"/>
<dbReference type="eggNOG" id="COG1135">
    <property type="taxonomic scope" value="Bacteria"/>
</dbReference>
<dbReference type="HOGENOM" id="CLU_000604_1_3_9"/>
<dbReference type="OrthoDB" id="9802264at2"/>
<dbReference type="Proteomes" id="UP000002513">
    <property type="component" value="Chromosome"/>
</dbReference>
<dbReference type="GO" id="GO:0005886">
    <property type="term" value="C:plasma membrane"/>
    <property type="evidence" value="ECO:0007669"/>
    <property type="project" value="UniProtKB-SubCell"/>
</dbReference>
<dbReference type="GO" id="GO:0033232">
    <property type="term" value="F:ABC-type D-methionine transporter activity"/>
    <property type="evidence" value="ECO:0007669"/>
    <property type="project" value="UniProtKB-EC"/>
</dbReference>
<dbReference type="GO" id="GO:0005524">
    <property type="term" value="F:ATP binding"/>
    <property type="evidence" value="ECO:0007669"/>
    <property type="project" value="UniProtKB-KW"/>
</dbReference>
<dbReference type="GO" id="GO:0016887">
    <property type="term" value="F:ATP hydrolysis activity"/>
    <property type="evidence" value="ECO:0007669"/>
    <property type="project" value="InterPro"/>
</dbReference>
<dbReference type="CDD" id="cd03258">
    <property type="entry name" value="ABC_MetN_methionine_transporter"/>
    <property type="match status" value="1"/>
</dbReference>
<dbReference type="FunFam" id="3.40.50.300:FF:000056">
    <property type="entry name" value="Cell division ATP-binding protein FtsE"/>
    <property type="match status" value="1"/>
</dbReference>
<dbReference type="Gene3D" id="3.30.70.260">
    <property type="match status" value="1"/>
</dbReference>
<dbReference type="Gene3D" id="3.40.50.300">
    <property type="entry name" value="P-loop containing nucleotide triphosphate hydrolases"/>
    <property type="match status" value="1"/>
</dbReference>
<dbReference type="InterPro" id="IPR003593">
    <property type="entry name" value="AAA+_ATPase"/>
</dbReference>
<dbReference type="InterPro" id="IPR003439">
    <property type="entry name" value="ABC_transporter-like_ATP-bd"/>
</dbReference>
<dbReference type="InterPro" id="IPR017871">
    <property type="entry name" value="ABC_transporter-like_CS"/>
</dbReference>
<dbReference type="InterPro" id="IPR045865">
    <property type="entry name" value="ACT-like_dom_sf"/>
</dbReference>
<dbReference type="InterPro" id="IPR041701">
    <property type="entry name" value="MetN_ABC"/>
</dbReference>
<dbReference type="InterPro" id="IPR050086">
    <property type="entry name" value="MetN_ABC_transporter-like"/>
</dbReference>
<dbReference type="InterPro" id="IPR018449">
    <property type="entry name" value="NIL_domain"/>
</dbReference>
<dbReference type="InterPro" id="IPR027417">
    <property type="entry name" value="P-loop_NTPase"/>
</dbReference>
<dbReference type="PANTHER" id="PTHR43166">
    <property type="entry name" value="AMINO ACID IMPORT ATP-BINDING PROTEIN"/>
    <property type="match status" value="1"/>
</dbReference>
<dbReference type="PANTHER" id="PTHR43166:SF30">
    <property type="entry name" value="METHIONINE IMPORT ATP-BINDING PROTEIN METN"/>
    <property type="match status" value="1"/>
</dbReference>
<dbReference type="Pfam" id="PF00005">
    <property type="entry name" value="ABC_tran"/>
    <property type="match status" value="1"/>
</dbReference>
<dbReference type="Pfam" id="PF09383">
    <property type="entry name" value="NIL"/>
    <property type="match status" value="1"/>
</dbReference>
<dbReference type="SMART" id="SM00382">
    <property type="entry name" value="AAA"/>
    <property type="match status" value="1"/>
</dbReference>
<dbReference type="SMART" id="SM00930">
    <property type="entry name" value="NIL"/>
    <property type="match status" value="1"/>
</dbReference>
<dbReference type="SUPFAM" id="SSF55021">
    <property type="entry name" value="ACT-like"/>
    <property type="match status" value="1"/>
</dbReference>
<dbReference type="SUPFAM" id="SSF52540">
    <property type="entry name" value="P-loop containing nucleoside triphosphate hydrolases"/>
    <property type="match status" value="1"/>
</dbReference>
<dbReference type="PROSITE" id="PS00211">
    <property type="entry name" value="ABC_TRANSPORTER_1"/>
    <property type="match status" value="1"/>
</dbReference>
<dbReference type="PROSITE" id="PS50893">
    <property type="entry name" value="ABC_TRANSPORTER_2"/>
    <property type="match status" value="1"/>
</dbReference>
<dbReference type="PROSITE" id="PS51264">
    <property type="entry name" value="METN"/>
    <property type="match status" value="1"/>
</dbReference>
<accession>Q92EZ6</accession>
<keyword id="KW-0029">Amino-acid transport</keyword>
<keyword id="KW-0067">ATP-binding</keyword>
<keyword id="KW-1003">Cell membrane</keyword>
<keyword id="KW-0472">Membrane</keyword>
<keyword id="KW-0547">Nucleotide-binding</keyword>
<keyword id="KW-1278">Translocase</keyword>
<keyword id="KW-0813">Transport</keyword>
<sequence>MIELHQVSKSFNVNGKTVEAVKNVSITVEKGEIFGVVGYSGAGKSTLVRCINLLERPDAGQVLIDGKNLSTLSSKELRVARRKIGMIFQGYNLLKTATVYDNIAKPLKLEGVPKDEIEIRVNKYLSIVGLEDKRNNYPSQLSGGQKQRVAIARALAHEPEILLSDEATSALDPETTEAILQLLLKINAELGITIFLITHELDVIQRICDRVAVMENGHLVEQGTVLDIFTKAKHATTKRFVGSEASFDIPQDLLEKYIATGKLVSLHFIGDEADEPALALVSRKFDVLPSILAGGIDHLKNGTLGKLLVHLKGDEAEYSKAIAYLKESGVVVEEVELL</sequence>
<proteinExistence type="inferred from homology"/>
<comment type="function">
    <text evidence="1">Part of the ABC transporter complex MetNIQ involved in methionine import. Responsible for energy coupling to the transport system.</text>
</comment>
<comment type="catalytic activity">
    <reaction evidence="1">
        <text>L-methionine(out) + ATP + H2O = L-methionine(in) + ADP + phosphate + H(+)</text>
        <dbReference type="Rhea" id="RHEA:29779"/>
        <dbReference type="ChEBI" id="CHEBI:15377"/>
        <dbReference type="ChEBI" id="CHEBI:15378"/>
        <dbReference type="ChEBI" id="CHEBI:30616"/>
        <dbReference type="ChEBI" id="CHEBI:43474"/>
        <dbReference type="ChEBI" id="CHEBI:57844"/>
        <dbReference type="ChEBI" id="CHEBI:456216"/>
        <dbReference type="EC" id="7.4.2.11"/>
    </reaction>
</comment>
<comment type="catalytic activity">
    <reaction evidence="1">
        <text>D-methionine(out) + ATP + H2O = D-methionine(in) + ADP + phosphate + H(+)</text>
        <dbReference type="Rhea" id="RHEA:29767"/>
        <dbReference type="ChEBI" id="CHEBI:15377"/>
        <dbReference type="ChEBI" id="CHEBI:15378"/>
        <dbReference type="ChEBI" id="CHEBI:30616"/>
        <dbReference type="ChEBI" id="CHEBI:43474"/>
        <dbReference type="ChEBI" id="CHEBI:57932"/>
        <dbReference type="ChEBI" id="CHEBI:456216"/>
        <dbReference type="EC" id="7.4.2.11"/>
    </reaction>
</comment>
<comment type="subunit">
    <text evidence="1">The complex is composed of two ATP-binding proteins (MetN), two transmembrane proteins (MetI) and a solute-binding protein (MetQ).</text>
</comment>
<comment type="subcellular location">
    <subcellularLocation>
        <location evidence="1">Cell membrane</location>
        <topology evidence="1">Peripheral membrane protein</topology>
    </subcellularLocation>
</comment>
<comment type="similarity">
    <text evidence="1">Belongs to the ABC transporter superfamily. Methionine importer (TC 3.A.1.24) family.</text>
</comment>
<feature type="chain" id="PRO_0000270326" description="Methionine import ATP-binding protein MetN 1">
    <location>
        <begin position="1"/>
        <end position="338"/>
    </location>
</feature>
<feature type="domain" description="ABC transporter" evidence="1">
    <location>
        <begin position="2"/>
        <end position="241"/>
    </location>
</feature>
<feature type="binding site" evidence="1">
    <location>
        <begin position="38"/>
        <end position="45"/>
    </location>
    <ligand>
        <name>ATP</name>
        <dbReference type="ChEBI" id="CHEBI:30616"/>
    </ligand>
</feature>
<evidence type="ECO:0000255" key="1">
    <source>
        <dbReference type="HAMAP-Rule" id="MF_01719"/>
    </source>
</evidence>
<reference key="1">
    <citation type="journal article" date="2001" name="Science">
        <title>Comparative genomics of Listeria species.</title>
        <authorList>
            <person name="Glaser P."/>
            <person name="Frangeul L."/>
            <person name="Buchrieser C."/>
            <person name="Rusniok C."/>
            <person name="Amend A."/>
            <person name="Baquero F."/>
            <person name="Berche P."/>
            <person name="Bloecker H."/>
            <person name="Brandt P."/>
            <person name="Chakraborty T."/>
            <person name="Charbit A."/>
            <person name="Chetouani F."/>
            <person name="Couve E."/>
            <person name="de Daruvar A."/>
            <person name="Dehoux P."/>
            <person name="Domann E."/>
            <person name="Dominguez-Bernal G."/>
            <person name="Duchaud E."/>
            <person name="Durant L."/>
            <person name="Dussurget O."/>
            <person name="Entian K.-D."/>
            <person name="Fsihi H."/>
            <person name="Garcia-del Portillo F."/>
            <person name="Garrido P."/>
            <person name="Gautier L."/>
            <person name="Goebel W."/>
            <person name="Gomez-Lopez N."/>
            <person name="Hain T."/>
            <person name="Hauf J."/>
            <person name="Jackson D."/>
            <person name="Jones L.-M."/>
            <person name="Kaerst U."/>
            <person name="Kreft J."/>
            <person name="Kuhn M."/>
            <person name="Kunst F."/>
            <person name="Kurapkat G."/>
            <person name="Madueno E."/>
            <person name="Maitournam A."/>
            <person name="Mata Vicente J."/>
            <person name="Ng E."/>
            <person name="Nedjari H."/>
            <person name="Nordsiek G."/>
            <person name="Novella S."/>
            <person name="de Pablos B."/>
            <person name="Perez-Diaz J.-C."/>
            <person name="Purcell R."/>
            <person name="Remmel B."/>
            <person name="Rose M."/>
            <person name="Schlueter T."/>
            <person name="Simoes N."/>
            <person name="Tierrez A."/>
            <person name="Vazquez-Boland J.-A."/>
            <person name="Voss H."/>
            <person name="Wehland J."/>
            <person name="Cossart P."/>
        </authorList>
    </citation>
    <scope>NUCLEOTIDE SEQUENCE [LARGE SCALE GENOMIC DNA]</scope>
    <source>
        <strain>ATCC BAA-680 / CLIP 11262</strain>
    </source>
</reference>
<gene>
    <name evidence="1" type="primary">metN1</name>
    <name type="ordered locus">lin0312</name>
</gene>
<protein>
    <recommendedName>
        <fullName evidence="1">Methionine import ATP-binding protein MetN 1</fullName>
        <ecNumber evidence="1">7.4.2.11</ecNumber>
    </recommendedName>
</protein>